<gene>
    <name evidence="1" type="primary">rimM</name>
    <name type="ordered locus">Xfasm12_0088</name>
</gene>
<comment type="function">
    <text evidence="1">An accessory protein needed during the final step in the assembly of 30S ribosomal subunit, possibly for assembly of the head region. Essential for efficient processing of 16S rRNA. May be needed both before and after RbfA during the maturation of 16S rRNA. It has affinity for free ribosomal 30S subunits but not for 70S ribosomes.</text>
</comment>
<comment type="subunit">
    <text evidence="1">Binds ribosomal protein uS19.</text>
</comment>
<comment type="subcellular location">
    <subcellularLocation>
        <location evidence="1">Cytoplasm</location>
    </subcellularLocation>
</comment>
<comment type="domain">
    <text evidence="1">The PRC barrel domain binds ribosomal protein uS19.</text>
</comment>
<comment type="similarity">
    <text evidence="1">Belongs to the RimM family.</text>
</comment>
<dbReference type="EMBL" id="CP000941">
    <property type="protein sequence ID" value="ACA11128.1"/>
    <property type="molecule type" value="Genomic_DNA"/>
</dbReference>
<dbReference type="RefSeq" id="WP_004085542.1">
    <property type="nucleotide sequence ID" value="NC_010513.1"/>
</dbReference>
<dbReference type="SMR" id="B0U289"/>
<dbReference type="KEGG" id="xfm:Xfasm12_0088"/>
<dbReference type="HOGENOM" id="CLU_077636_1_0_6"/>
<dbReference type="GO" id="GO:0005737">
    <property type="term" value="C:cytoplasm"/>
    <property type="evidence" value="ECO:0007669"/>
    <property type="project" value="UniProtKB-SubCell"/>
</dbReference>
<dbReference type="GO" id="GO:0005840">
    <property type="term" value="C:ribosome"/>
    <property type="evidence" value="ECO:0007669"/>
    <property type="project" value="InterPro"/>
</dbReference>
<dbReference type="GO" id="GO:0043022">
    <property type="term" value="F:ribosome binding"/>
    <property type="evidence" value="ECO:0007669"/>
    <property type="project" value="InterPro"/>
</dbReference>
<dbReference type="GO" id="GO:0042274">
    <property type="term" value="P:ribosomal small subunit biogenesis"/>
    <property type="evidence" value="ECO:0007669"/>
    <property type="project" value="UniProtKB-UniRule"/>
</dbReference>
<dbReference type="GO" id="GO:0006364">
    <property type="term" value="P:rRNA processing"/>
    <property type="evidence" value="ECO:0007669"/>
    <property type="project" value="UniProtKB-UniRule"/>
</dbReference>
<dbReference type="Gene3D" id="2.30.30.240">
    <property type="entry name" value="PRC-barrel domain"/>
    <property type="match status" value="1"/>
</dbReference>
<dbReference type="Gene3D" id="2.40.30.60">
    <property type="entry name" value="RimM"/>
    <property type="match status" value="1"/>
</dbReference>
<dbReference type="HAMAP" id="MF_00014">
    <property type="entry name" value="Ribosome_mat_RimM"/>
    <property type="match status" value="1"/>
</dbReference>
<dbReference type="InterPro" id="IPR011033">
    <property type="entry name" value="PRC_barrel-like_sf"/>
</dbReference>
<dbReference type="InterPro" id="IPR056792">
    <property type="entry name" value="PRC_RimM"/>
</dbReference>
<dbReference type="InterPro" id="IPR011961">
    <property type="entry name" value="RimM"/>
</dbReference>
<dbReference type="InterPro" id="IPR002676">
    <property type="entry name" value="RimM_N"/>
</dbReference>
<dbReference type="InterPro" id="IPR036976">
    <property type="entry name" value="RimM_N_sf"/>
</dbReference>
<dbReference type="InterPro" id="IPR009000">
    <property type="entry name" value="Transl_B-barrel_sf"/>
</dbReference>
<dbReference type="NCBIfam" id="TIGR02273">
    <property type="entry name" value="16S_RimM"/>
    <property type="match status" value="1"/>
</dbReference>
<dbReference type="PANTHER" id="PTHR33692">
    <property type="entry name" value="RIBOSOME MATURATION FACTOR RIMM"/>
    <property type="match status" value="1"/>
</dbReference>
<dbReference type="PANTHER" id="PTHR33692:SF1">
    <property type="entry name" value="RIBOSOME MATURATION FACTOR RIMM"/>
    <property type="match status" value="1"/>
</dbReference>
<dbReference type="Pfam" id="PF24986">
    <property type="entry name" value="PRC_RimM"/>
    <property type="match status" value="1"/>
</dbReference>
<dbReference type="Pfam" id="PF01782">
    <property type="entry name" value="RimM"/>
    <property type="match status" value="1"/>
</dbReference>
<dbReference type="SUPFAM" id="SSF50346">
    <property type="entry name" value="PRC-barrel domain"/>
    <property type="match status" value="1"/>
</dbReference>
<dbReference type="SUPFAM" id="SSF50447">
    <property type="entry name" value="Translation proteins"/>
    <property type="match status" value="1"/>
</dbReference>
<proteinExistence type="inferred from homology"/>
<protein>
    <recommendedName>
        <fullName evidence="1">Ribosome maturation factor RimM</fullName>
    </recommendedName>
</protein>
<name>RIMM_XYLFM</name>
<accession>B0U289</accession>
<feature type="chain" id="PRO_1000089535" description="Ribosome maturation factor RimM">
    <location>
        <begin position="1"/>
        <end position="170"/>
    </location>
</feature>
<feature type="domain" description="PRC barrel" evidence="1">
    <location>
        <begin position="97"/>
        <end position="170"/>
    </location>
</feature>
<sequence>MKDNERRILLGRVVGGFGLRGEIKMESWTEPRDAIFRYQPWLLRSPTGTESMLNGARGYDTGKRLIATFPGINDRNAVEAICGTEIYVPRSALPPPHPDEYYWVDLEGLQVHTLEGVVLGSVSHLFSNGANDVVVIHGERERLIPFVQPDYVKSVDFEAERIVVDWDPEF</sequence>
<reference key="1">
    <citation type="journal article" date="2010" name="J. Bacteriol.">
        <title>Whole genome sequences of two Xylella fastidiosa strains (M12 and M23) causing almond leaf scorch disease in California.</title>
        <authorList>
            <person name="Chen J."/>
            <person name="Xie G."/>
            <person name="Han S."/>
            <person name="Chertkov O."/>
            <person name="Sims D."/>
            <person name="Civerolo E.L."/>
        </authorList>
    </citation>
    <scope>NUCLEOTIDE SEQUENCE [LARGE SCALE GENOMIC DNA]</scope>
    <source>
        <strain>M12</strain>
    </source>
</reference>
<organism>
    <name type="scientific">Xylella fastidiosa (strain M12)</name>
    <dbReference type="NCBI Taxonomy" id="405440"/>
    <lineage>
        <taxon>Bacteria</taxon>
        <taxon>Pseudomonadati</taxon>
        <taxon>Pseudomonadota</taxon>
        <taxon>Gammaproteobacteria</taxon>
        <taxon>Lysobacterales</taxon>
        <taxon>Lysobacteraceae</taxon>
        <taxon>Xylella</taxon>
    </lineage>
</organism>
<keyword id="KW-0143">Chaperone</keyword>
<keyword id="KW-0963">Cytoplasm</keyword>
<keyword id="KW-0690">Ribosome biogenesis</keyword>
<keyword id="KW-0698">rRNA processing</keyword>
<evidence type="ECO:0000255" key="1">
    <source>
        <dbReference type="HAMAP-Rule" id="MF_00014"/>
    </source>
</evidence>